<reference key="1">
    <citation type="journal article" date="1993" name="J. Biol. Chem.">
        <title>Purification, molecular cloning, and sequencing of phospholipase C-beta 4.</title>
        <authorList>
            <person name="Lee C.-W."/>
            <person name="Park D.J."/>
            <person name="Lee K.-H."/>
            <person name="Kim C.G."/>
            <person name="Rhee S.G."/>
        </authorList>
    </citation>
    <scope>NUCLEOTIDE SEQUENCE [MRNA] (ISOFORM A)</scope>
    <source>
        <strain>Sprague-Dawley</strain>
        <tissue>Brain</tissue>
    </source>
</reference>
<reference key="2">
    <citation type="journal article" date="1993" name="Biochem. Biophys. Res. Commun.">
        <title>Cloning of cDNA encoding rat phospholipase C-beta 4, a new member of the phospholipase C.</title>
        <authorList>
            <person name="Kim M.J."/>
            <person name="Bahk Y.Y."/>
            <person name="Min D.S."/>
            <person name="Lee S.J."/>
            <person name="Ryu S.H."/>
            <person name="Suh P.G."/>
        </authorList>
    </citation>
    <scope>NUCLEOTIDE SEQUENCE [MRNA] (ISOFORM B)</scope>
    <source>
        <strain>Sprague-Dawley</strain>
        <tissue>Brain</tissue>
    </source>
</reference>
<reference key="3">
    <citation type="journal article" date="1999" name="Biochim. Biophys. Acta">
        <title>A unique isoform of phospholipase Cbeta4 highly expressed in the cerebellum and eye.</title>
        <authorList>
            <person name="Adamski F.M."/>
            <person name="Timms K.M."/>
            <person name="Shieh B.H."/>
        </authorList>
    </citation>
    <scope>NUCLEOTIDE SEQUENCE [MRNA] OF 447-1175 (ISOFORM C)</scope>
    <source>
        <tissue>Brain</tissue>
    </source>
</reference>
<reference key="4">
    <citation type="journal article" date="2012" name="Nat. Commun.">
        <title>Quantitative maps of protein phosphorylation sites across 14 different rat organs and tissues.</title>
        <authorList>
            <person name="Lundby A."/>
            <person name="Secher A."/>
            <person name="Lage K."/>
            <person name="Nordsborg N.B."/>
            <person name="Dmytriyev A."/>
            <person name="Lundby C."/>
            <person name="Olsen J.V."/>
        </authorList>
    </citation>
    <scope>PHOSPHORYLATION [LARGE SCALE ANALYSIS] AT THR-886</scope>
    <scope>IDENTIFICATION BY MASS SPECTROMETRY [LARGE SCALE ANALYSIS]</scope>
</reference>
<feature type="initiator methionine" description="Removed" evidence="2">
    <location>
        <position position="1"/>
    </location>
</feature>
<feature type="chain" id="PRO_0000088496" description="1-phosphatidylinositol 4,5-bisphosphate phosphodiesterase beta-4">
    <location>
        <begin position="2"/>
        <end position="1175"/>
    </location>
</feature>
<feature type="domain" description="PI-PLC X-box" evidence="4">
    <location>
        <begin position="313"/>
        <end position="463"/>
    </location>
</feature>
<feature type="domain" description="PI-PLC Y-box" evidence="5">
    <location>
        <begin position="565"/>
        <end position="681"/>
    </location>
</feature>
<feature type="domain" description="C2" evidence="3">
    <location>
        <begin position="684"/>
        <end position="809"/>
    </location>
</feature>
<feature type="region of interest" description="Disordered" evidence="6">
    <location>
        <begin position="487"/>
        <end position="512"/>
    </location>
</feature>
<feature type="region of interest" description="Disordered" evidence="6">
    <location>
        <begin position="860"/>
        <end position="904"/>
    </location>
</feature>
<feature type="region of interest" description="Disordered" evidence="6">
    <location>
        <begin position="1082"/>
        <end position="1110"/>
    </location>
</feature>
<feature type="compositionally biased region" description="Acidic residues" evidence="6">
    <location>
        <begin position="493"/>
        <end position="508"/>
    </location>
</feature>
<feature type="compositionally biased region" description="Polar residues" evidence="6">
    <location>
        <begin position="885"/>
        <end position="900"/>
    </location>
</feature>
<feature type="compositionally biased region" description="Polar residues" evidence="6">
    <location>
        <begin position="1085"/>
        <end position="1094"/>
    </location>
</feature>
<feature type="compositionally biased region" description="Basic and acidic residues" evidence="6">
    <location>
        <begin position="1095"/>
        <end position="1109"/>
    </location>
</feature>
<feature type="active site" evidence="4">
    <location>
        <position position="328"/>
    </location>
</feature>
<feature type="active site" evidence="4">
    <location>
        <position position="375"/>
    </location>
</feature>
<feature type="modified residue" description="N-acetylalanine" evidence="2">
    <location>
        <position position="2"/>
    </location>
</feature>
<feature type="modified residue" description="Phosphothreonine" evidence="11">
    <location>
        <position position="886"/>
    </location>
</feature>
<feature type="splice variant" id="VSP_004724" description="In isoform B." evidence="7">
    <original>VKEIVAQHTK</original>
    <variation>GKQRDASPSG</variation>
    <location>
        <begin position="1013"/>
        <end position="1022"/>
    </location>
</feature>
<feature type="splice variant" id="VSP_004725" description="In isoform B." evidence="7">
    <location>
        <begin position="1023"/>
        <end position="1175"/>
    </location>
</feature>
<feature type="splice variant" id="VSP_004726" description="In isoform C." evidence="8">
    <original>AKEMQQMVKLEAEMDRRPATVV</original>
    <variation>LLKSCHAVSQTQGEGDAADGEIGSRDGPQTSNSSMKLQNAN</variation>
    <location>
        <begin position="1154"/>
        <end position="1175"/>
    </location>
</feature>
<feature type="sequence conflict" description="In Ref. 2; AAD10403/AAC98145." evidence="9" ref="2">
    <original>L</original>
    <variation>M</variation>
    <location>
        <position position="255"/>
    </location>
</feature>
<feature type="sequence conflict" description="In Ref. 2; AAD10403/AAC98145." evidence="9" ref="2">
    <original>R</original>
    <variation>A</variation>
    <location>
        <position position="308"/>
    </location>
</feature>
<feature type="sequence conflict" description="In Ref. 2; AAD10403/AAC98145." evidence="9" ref="2">
    <original>Q</original>
    <variation>E</variation>
    <location>
        <position position="417"/>
    </location>
</feature>
<feature type="sequence conflict" description="In Ref. 2; AAD10403/AAC98145." evidence="9" ref="2">
    <original>E</original>
    <variation>K</variation>
    <location>
        <position position="470"/>
    </location>
</feature>
<feature type="sequence conflict" description="In Ref. 1; AAK13557." evidence="9" ref="1">
    <original>A</original>
    <variation>AA</variation>
    <location>
        <position position="504"/>
    </location>
</feature>
<feature type="sequence conflict" description="In Ref. 2; AAD10403/AAC98145." evidence="9" ref="2">
    <original>EQ</original>
    <variation>DE</variation>
    <location>
        <begin position="545"/>
        <end position="546"/>
    </location>
</feature>
<feature type="sequence conflict" description="In Ref. 2; AAD10403/AAC98145." evidence="9" ref="2">
    <original>I</original>
    <variation>L</variation>
    <location>
        <position position="734"/>
    </location>
</feature>
<feature type="sequence conflict" description="In Ref. 2; AAD10403/AAC98145." evidence="9" ref="2">
    <original>R</original>
    <variation>H</variation>
    <location>
        <position position="741"/>
    </location>
</feature>
<feature type="sequence conflict" description="In Ref. 2; AAD10403/AAC98145." evidence="9" ref="2">
    <original>L</original>
    <variation>M</variation>
    <location>
        <position position="764"/>
    </location>
</feature>
<feature type="sequence conflict" description="In Ref. 2; AAD10403/AAC98145." evidence="9" ref="2">
    <original>D</original>
    <variation>N</variation>
    <location>
        <position position="776"/>
    </location>
</feature>
<feature type="sequence conflict" description="In Ref. 1; AAK13557." evidence="9" ref="1">
    <original>F</original>
    <variation>L</variation>
    <location>
        <position position="828"/>
    </location>
</feature>
<feature type="sequence conflict" description="In Ref. 2; AAD10403/AAC98145." evidence="9" ref="2">
    <original>S</original>
    <variation>Y</variation>
    <location>
        <position position="843"/>
    </location>
</feature>
<feature type="sequence conflict" description="In Ref. 3; AAC24984." evidence="9" ref="3">
    <original>L</original>
    <variation>M</variation>
    <location>
        <position position="852"/>
    </location>
</feature>
<feature type="sequence conflict" description="In Ref. 2; AAD10403/AAC98145." evidence="9" ref="2">
    <original>Q</original>
    <variation>T</variation>
    <location>
        <position position="916"/>
    </location>
</feature>
<feature type="sequence conflict" description="In Ref. 3; AAC24984." evidence="9" ref="3">
    <original>W</original>
    <variation>C</variation>
    <location>
        <position position="1024"/>
    </location>
</feature>
<feature type="sequence conflict" description="In Ref. 3; AAC24984." evidence="9" ref="3">
    <original>L</original>
    <variation>M</variation>
    <location>
        <position position="1043"/>
    </location>
</feature>
<feature type="sequence conflict" description="In Ref. 3; AAC24984." evidence="9" ref="3">
    <original>A</original>
    <variation>V</variation>
    <location>
        <position position="1057"/>
    </location>
</feature>
<feature type="sequence conflict" description="In Ref. 3; AAC24984." evidence="9" ref="3">
    <original>L</original>
    <variation>V</variation>
    <location>
        <position position="1067"/>
    </location>
</feature>
<feature type="sequence conflict" description="In Ref. 3; AAC24984." evidence="9" ref="3">
    <original>S</original>
    <variation>C</variation>
    <location>
        <position position="1084"/>
    </location>
</feature>
<accession>Q9QW07</accession>
<accession>O88356</accession>
<accession>Q9Z0G6</accession>
<proteinExistence type="evidence at protein level"/>
<comment type="function">
    <text evidence="1 2">Activated phosphatidylinositol-specific phospholipase C enzymes catalyze the production of the second messenger molecules diacylglycerol (DAG) and inositol 1,4,5-trisphosphate (IP3) involved in G-protein coupled receptor signaling pathways. PLCB4 is a direct effector of the endothelin receptor signaling pathway that plays an essential role in lower jaw and middle ear structures development (By similarity).</text>
</comment>
<comment type="catalytic activity">
    <reaction evidence="1">
        <text>a 1,2-diacyl-sn-glycero-3-phospho-(1D-myo-inositol-4,5-bisphosphate) + H2O = 1D-myo-inositol 1,4,5-trisphosphate + a 1,2-diacyl-sn-glycerol + H(+)</text>
        <dbReference type="Rhea" id="RHEA:33179"/>
        <dbReference type="ChEBI" id="CHEBI:15377"/>
        <dbReference type="ChEBI" id="CHEBI:15378"/>
        <dbReference type="ChEBI" id="CHEBI:17815"/>
        <dbReference type="ChEBI" id="CHEBI:58456"/>
        <dbReference type="ChEBI" id="CHEBI:203600"/>
        <dbReference type="EC" id="3.1.4.11"/>
    </reaction>
    <physiologicalReaction direction="left-to-right" evidence="1">
        <dbReference type="Rhea" id="RHEA:33180"/>
    </physiologicalReaction>
</comment>
<comment type="catalytic activity">
    <reaction evidence="1">
        <text>a 1,2-diacyl-sn-glycero-3-phospho-(1D-myo-inositol) + H2O = 1D-myo-inositol 1-phosphate + a 1,2-diacyl-sn-glycerol + H(+)</text>
        <dbReference type="Rhea" id="RHEA:43484"/>
        <dbReference type="ChEBI" id="CHEBI:15377"/>
        <dbReference type="ChEBI" id="CHEBI:15378"/>
        <dbReference type="ChEBI" id="CHEBI:17815"/>
        <dbReference type="ChEBI" id="CHEBI:57880"/>
        <dbReference type="ChEBI" id="CHEBI:58433"/>
    </reaction>
    <physiologicalReaction direction="left-to-right" evidence="1">
        <dbReference type="Rhea" id="RHEA:43485"/>
    </physiologicalReaction>
</comment>
<comment type="cofactor">
    <cofactor>
        <name>Ca(2+)</name>
        <dbReference type="ChEBI" id="CHEBI:29108"/>
    </cofactor>
</comment>
<comment type="subcellular location">
    <subcellularLocation>
        <location evidence="2">Cell membrane</location>
    </subcellularLocation>
</comment>
<comment type="alternative products">
    <event type="alternative splicing"/>
    <isoform>
        <id>Q9QW07-1</id>
        <name>A</name>
        <sequence type="displayed"/>
    </isoform>
    <isoform>
        <id>Q9QW07-2</id>
        <name>B</name>
        <sequence type="described" ref="VSP_004724 VSP_004725"/>
    </isoform>
    <isoform>
        <id>Q9QW07-3</id>
        <name>C</name>
        <sequence type="described" ref="VSP_004726"/>
    </isoform>
</comment>
<comment type="tissue specificity">
    <text>Preferentially expressed in the retina.</text>
</comment>
<protein>
    <recommendedName>
        <fullName evidence="9">1-phosphatidylinositol 4,5-bisphosphate phosphodiesterase beta-4</fullName>
        <ecNumber evidence="1">3.1.4.11</ecNumber>
    </recommendedName>
    <alternativeName>
        <fullName>Phosphoinositide phospholipase C-beta-4</fullName>
    </alternativeName>
    <alternativeName>
        <fullName>Phospholipase C-beta-4</fullName>
        <shortName>PLC-beta-4</shortName>
    </alternativeName>
</protein>
<dbReference type="EC" id="3.1.4.11" evidence="1"/>
<dbReference type="EMBL" id="L15556">
    <property type="protein sequence ID" value="AAK13557.1"/>
    <property type="molecule type" value="mRNA"/>
</dbReference>
<dbReference type="EMBL" id="U57836">
    <property type="protein sequence ID" value="AAD10403.1"/>
    <property type="molecule type" value="mRNA"/>
</dbReference>
<dbReference type="EMBL" id="AF031370">
    <property type="protein sequence ID" value="AAC98145.1"/>
    <property type="molecule type" value="mRNA"/>
</dbReference>
<dbReference type="EMBL" id="AF027571">
    <property type="protein sequence ID" value="AAC24984.1"/>
    <property type="molecule type" value="mRNA"/>
</dbReference>
<dbReference type="PIR" id="A48047">
    <property type="entry name" value="A48047"/>
</dbReference>
<dbReference type="RefSeq" id="NP_077329.1">
    <property type="nucleotide sequence ID" value="NM_024353.1"/>
</dbReference>
<dbReference type="SMR" id="Q9QW07"/>
<dbReference type="FunCoup" id="Q9QW07">
    <property type="interactions" value="1586"/>
</dbReference>
<dbReference type="IntAct" id="Q9QW07">
    <property type="interactions" value="2"/>
</dbReference>
<dbReference type="STRING" id="10116.ENSRNOP00000045972"/>
<dbReference type="iPTMnet" id="Q9QW07"/>
<dbReference type="PhosphoSitePlus" id="Q9QW07"/>
<dbReference type="jPOST" id="Q9QW07"/>
<dbReference type="PaxDb" id="10116-ENSRNOP00000045972"/>
<dbReference type="GeneID" id="25031"/>
<dbReference type="KEGG" id="rno:25031"/>
<dbReference type="UCSC" id="RGD:3345">
    <molecule id="Q9QW07-1"/>
    <property type="organism name" value="rat"/>
</dbReference>
<dbReference type="AGR" id="RGD:3345"/>
<dbReference type="CTD" id="5332"/>
<dbReference type="RGD" id="3345">
    <property type="gene designation" value="Plcb4"/>
</dbReference>
<dbReference type="eggNOG" id="KOG1265">
    <property type="taxonomic scope" value="Eukaryota"/>
</dbReference>
<dbReference type="InParanoid" id="Q9QW07"/>
<dbReference type="OrthoDB" id="269822at2759"/>
<dbReference type="BRENDA" id="3.1.4.11">
    <property type="organism ID" value="5301"/>
</dbReference>
<dbReference type="Reactome" id="R-RNO-112043">
    <property type="pathway name" value="PLC beta mediated events"/>
</dbReference>
<dbReference type="Reactome" id="R-RNO-1855204">
    <property type="pathway name" value="Synthesis of IP3 and IP4 in the cytosol"/>
</dbReference>
<dbReference type="Reactome" id="R-RNO-416476">
    <property type="pathway name" value="G alpha (q) signalling events"/>
</dbReference>
<dbReference type="PRO" id="PR:Q9QW07"/>
<dbReference type="Proteomes" id="UP000002494">
    <property type="component" value="Unplaced"/>
</dbReference>
<dbReference type="GO" id="GO:0030425">
    <property type="term" value="C:dendrite"/>
    <property type="evidence" value="ECO:0000266"/>
    <property type="project" value="RGD"/>
</dbReference>
<dbReference type="GO" id="GO:0098978">
    <property type="term" value="C:glutamatergic synapse"/>
    <property type="evidence" value="ECO:0000266"/>
    <property type="project" value="RGD"/>
</dbReference>
<dbReference type="GO" id="GO:0005634">
    <property type="term" value="C:nucleus"/>
    <property type="evidence" value="ECO:0000266"/>
    <property type="project" value="RGD"/>
</dbReference>
<dbReference type="GO" id="GO:0098688">
    <property type="term" value="C:parallel fiber to Purkinje cell synapse"/>
    <property type="evidence" value="ECO:0000266"/>
    <property type="project" value="RGD"/>
</dbReference>
<dbReference type="GO" id="GO:0005886">
    <property type="term" value="C:plasma membrane"/>
    <property type="evidence" value="ECO:0000250"/>
    <property type="project" value="UniProtKB"/>
</dbReference>
<dbReference type="GO" id="GO:0098794">
    <property type="term" value="C:postsynapse"/>
    <property type="evidence" value="ECO:0000266"/>
    <property type="project" value="RGD"/>
</dbReference>
<dbReference type="GO" id="GO:0014069">
    <property type="term" value="C:postsynaptic density"/>
    <property type="evidence" value="ECO:0000266"/>
    <property type="project" value="RGD"/>
</dbReference>
<dbReference type="GO" id="GO:0005790">
    <property type="term" value="C:smooth endoplasmic reticulum"/>
    <property type="evidence" value="ECO:0000266"/>
    <property type="project" value="RGD"/>
</dbReference>
<dbReference type="GO" id="GO:0005509">
    <property type="term" value="F:calcium ion binding"/>
    <property type="evidence" value="ECO:0007669"/>
    <property type="project" value="InterPro"/>
</dbReference>
<dbReference type="GO" id="GO:0051019">
    <property type="term" value="F:mitogen-activated protein kinase binding"/>
    <property type="evidence" value="ECO:0000353"/>
    <property type="project" value="RGD"/>
</dbReference>
<dbReference type="GO" id="GO:0004435">
    <property type="term" value="F:phosphatidylinositol-4,5-bisphosphate phospholipase C activity"/>
    <property type="evidence" value="ECO:0000318"/>
    <property type="project" value="GO_Central"/>
</dbReference>
<dbReference type="GO" id="GO:0016042">
    <property type="term" value="P:lipid catabolic process"/>
    <property type="evidence" value="ECO:0007669"/>
    <property type="project" value="UniProtKB-KW"/>
</dbReference>
<dbReference type="GO" id="GO:0050804">
    <property type="term" value="P:modulation of chemical synaptic transmission"/>
    <property type="evidence" value="ECO:0000266"/>
    <property type="project" value="RGD"/>
</dbReference>
<dbReference type="GO" id="GO:0043267">
    <property type="term" value="P:negative regulation of potassium ion transport"/>
    <property type="evidence" value="ECO:0000315"/>
    <property type="project" value="RGD"/>
</dbReference>
<dbReference type="GO" id="GO:0046488">
    <property type="term" value="P:phosphatidylinositol metabolic process"/>
    <property type="evidence" value="ECO:0000318"/>
    <property type="project" value="GO_Central"/>
</dbReference>
<dbReference type="GO" id="GO:0048015">
    <property type="term" value="P:phosphatidylinositol-mediated signaling"/>
    <property type="evidence" value="ECO:0000318"/>
    <property type="project" value="GO_Central"/>
</dbReference>
<dbReference type="GO" id="GO:0160135">
    <property type="term" value="P:phospholipase C-activating endothelin receptor signaling pathway"/>
    <property type="evidence" value="ECO:0000250"/>
    <property type="project" value="UniProtKB"/>
</dbReference>
<dbReference type="GO" id="GO:0007602">
    <property type="term" value="P:phototransduction"/>
    <property type="evidence" value="ECO:0000303"/>
    <property type="project" value="RGD"/>
</dbReference>
<dbReference type="GO" id="GO:0051209">
    <property type="term" value="P:release of sequestered calcium ion into cytosol"/>
    <property type="evidence" value="ECO:0000318"/>
    <property type="project" value="GO_Central"/>
</dbReference>
<dbReference type="CDD" id="cd00275">
    <property type="entry name" value="C2_PLC_like"/>
    <property type="match status" value="1"/>
</dbReference>
<dbReference type="CDD" id="cd16211">
    <property type="entry name" value="EFh_PI-PLCbeta4"/>
    <property type="match status" value="1"/>
</dbReference>
<dbReference type="CDD" id="cd13361">
    <property type="entry name" value="PH_PLC_beta"/>
    <property type="match status" value="1"/>
</dbReference>
<dbReference type="CDD" id="cd08591">
    <property type="entry name" value="PI-PLCc_beta"/>
    <property type="match status" value="1"/>
</dbReference>
<dbReference type="FunFam" id="1.10.238.10:FF:000024">
    <property type="entry name" value="1-phosphatidylinositol 4,5-bisphosphate phosphodiesterase"/>
    <property type="match status" value="1"/>
</dbReference>
<dbReference type="FunFam" id="1.20.1230.10:FF:000002">
    <property type="entry name" value="1-phosphatidylinositol 4,5-bisphosphate phosphodiesterase"/>
    <property type="match status" value="1"/>
</dbReference>
<dbReference type="FunFam" id="2.30.29.240:FF:000001">
    <property type="entry name" value="1-phosphatidylinositol 4,5-bisphosphate phosphodiesterase"/>
    <property type="match status" value="1"/>
</dbReference>
<dbReference type="FunFam" id="2.60.40.150:FF:000008">
    <property type="entry name" value="1-phosphatidylinositol 4,5-bisphosphate phosphodiesterase"/>
    <property type="match status" value="1"/>
</dbReference>
<dbReference type="Gene3D" id="2.30.29.240">
    <property type="match status" value="1"/>
</dbReference>
<dbReference type="Gene3D" id="2.60.40.150">
    <property type="entry name" value="C2 domain"/>
    <property type="match status" value="1"/>
</dbReference>
<dbReference type="Gene3D" id="1.10.238.10">
    <property type="entry name" value="EF-hand"/>
    <property type="match status" value="1"/>
</dbReference>
<dbReference type="Gene3D" id="3.20.20.190">
    <property type="entry name" value="Phosphatidylinositol (PI) phosphodiesterase"/>
    <property type="match status" value="1"/>
</dbReference>
<dbReference type="Gene3D" id="1.20.1230.10">
    <property type="entry name" value="Phospholipase C beta, distal C-terminal domain"/>
    <property type="match status" value="1"/>
</dbReference>
<dbReference type="InterPro" id="IPR000008">
    <property type="entry name" value="C2_dom"/>
</dbReference>
<dbReference type="InterPro" id="IPR035892">
    <property type="entry name" value="C2_domain_sf"/>
</dbReference>
<dbReference type="InterPro" id="IPR011992">
    <property type="entry name" value="EF-hand-dom_pair"/>
</dbReference>
<dbReference type="InterPro" id="IPR001192">
    <property type="entry name" value="PI-PLC_fam"/>
</dbReference>
<dbReference type="InterPro" id="IPR016280">
    <property type="entry name" value="PLC-beta"/>
</dbReference>
<dbReference type="InterPro" id="IPR014815">
    <property type="entry name" value="PLC-beta_C"/>
</dbReference>
<dbReference type="InterPro" id="IPR042531">
    <property type="entry name" value="PLC-beta_C_sf"/>
</dbReference>
<dbReference type="InterPro" id="IPR037862">
    <property type="entry name" value="PLC-beta_PH"/>
</dbReference>
<dbReference type="InterPro" id="IPR017946">
    <property type="entry name" value="PLC-like_Pdiesterase_TIM-brl"/>
</dbReference>
<dbReference type="InterPro" id="IPR053945">
    <property type="entry name" value="PLCB1-4-like_EFh"/>
</dbReference>
<dbReference type="InterPro" id="IPR000909">
    <property type="entry name" value="PLipase_C_PInositol-sp_X_dom"/>
</dbReference>
<dbReference type="InterPro" id="IPR001711">
    <property type="entry name" value="PLipase_C_Pinositol-sp_Y"/>
</dbReference>
<dbReference type="PANTHER" id="PTHR10336:SF36">
    <property type="entry name" value="1-PHOSPHATIDYLINOSITOL 4,5-BISPHOSPHATE PHOSPHODIESTERASE BETA-4"/>
    <property type="match status" value="1"/>
</dbReference>
<dbReference type="PANTHER" id="PTHR10336">
    <property type="entry name" value="PHOSPHOINOSITIDE-SPECIFIC PHOSPHOLIPASE C FAMILY PROTEIN"/>
    <property type="match status" value="1"/>
</dbReference>
<dbReference type="Pfam" id="PF00168">
    <property type="entry name" value="C2"/>
    <property type="match status" value="1"/>
</dbReference>
<dbReference type="Pfam" id="PF17787">
    <property type="entry name" value="PH_14"/>
    <property type="match status" value="1"/>
</dbReference>
<dbReference type="Pfam" id="PF00388">
    <property type="entry name" value="PI-PLC-X"/>
    <property type="match status" value="1"/>
</dbReference>
<dbReference type="Pfam" id="PF00387">
    <property type="entry name" value="PI-PLC-Y"/>
    <property type="match status" value="1"/>
</dbReference>
<dbReference type="Pfam" id="PF08703">
    <property type="entry name" value="PLC-beta_C"/>
    <property type="match status" value="1"/>
</dbReference>
<dbReference type="Pfam" id="PF22631">
    <property type="entry name" value="PLCB1-4-like_EFh"/>
    <property type="match status" value="1"/>
</dbReference>
<dbReference type="PIRSF" id="PIRSF000956">
    <property type="entry name" value="PLC-beta"/>
    <property type="match status" value="1"/>
</dbReference>
<dbReference type="PRINTS" id="PR00390">
    <property type="entry name" value="PHPHLIPASEC"/>
</dbReference>
<dbReference type="SMART" id="SM00239">
    <property type="entry name" value="C2"/>
    <property type="match status" value="1"/>
</dbReference>
<dbReference type="SMART" id="SM00148">
    <property type="entry name" value="PLCXc"/>
    <property type="match status" value="1"/>
</dbReference>
<dbReference type="SMART" id="SM00149">
    <property type="entry name" value="PLCYc"/>
    <property type="match status" value="1"/>
</dbReference>
<dbReference type="SUPFAM" id="SSF69989">
    <property type="entry name" value="C-terminal domain of PLC-beta"/>
    <property type="match status" value="1"/>
</dbReference>
<dbReference type="SUPFAM" id="SSF49562">
    <property type="entry name" value="C2 domain (Calcium/lipid-binding domain, CaLB)"/>
    <property type="match status" value="1"/>
</dbReference>
<dbReference type="SUPFAM" id="SSF47473">
    <property type="entry name" value="EF-hand"/>
    <property type="match status" value="1"/>
</dbReference>
<dbReference type="SUPFAM" id="SSF50729">
    <property type="entry name" value="PH domain-like"/>
    <property type="match status" value="1"/>
</dbReference>
<dbReference type="SUPFAM" id="SSF51695">
    <property type="entry name" value="PLC-like phosphodiesterases"/>
    <property type="match status" value="1"/>
</dbReference>
<dbReference type="PROSITE" id="PS50004">
    <property type="entry name" value="C2"/>
    <property type="match status" value="1"/>
</dbReference>
<dbReference type="PROSITE" id="PS50007">
    <property type="entry name" value="PIPLC_X_DOMAIN"/>
    <property type="match status" value="1"/>
</dbReference>
<dbReference type="PROSITE" id="PS50008">
    <property type="entry name" value="PIPLC_Y_DOMAIN"/>
    <property type="match status" value="1"/>
</dbReference>
<sequence>MAKPYEFNWQKEVPSFLQEGAVFDRYEEESFVFEPNCLFKVDEFGFFLTWKSEGKEGQVLECSLINSIRLAAIPKDPKILAALESVGKSENDLEGRILCVCSGTDLVNIGFTYMVAENPEITKQWVEGLRSIIHNFRANNVSPMTCLKKHWMKLAFLTNTSGKIPVRSITRTFASGKTEKVIFQALKELGLPSGKNDEIEPAAFTYEKFYELTQKICPRTDIEDLFKKINGDKTDYLTVDQLVSFLNEHQRDPRLNEILFPFYDAKRAMQIIEMYEPDEELKKKGLISSDGFCRYLMSDENAPVFLDRLELYQEMDHPLAHYFISSSHNTYLTGRQFGGKSSVEMYRQVLLAGCRCVELDCWDGKGEDQEPIITHGKAMCTDILFKDVIQAIKETAFVTSEYPVILSFENHCSKYQQYQMSKYCEDLFGDLLLKQALESHPLEPGRLLPSPNDLKRKILIKNKRLKPEVEKKQLEALKSMMEAGESAAPASILEDDNEEEIESADQEEEAHPEYKFGNELSADDFSHKEAVANSVKKGLVTVEDEQAWMASYKYVGATTNIHPYLSTMINYAQPVKFQGFHVAEERNIHYNMSSFNESVGLGYLKTHAIEFVNYNKRQMSRIYPKGGRVDSSNYMPQIFWNAGCQMVSLNYQTPDLAMQLNQGKFEYNGSCGYLLKPDFMRRPDRTFDPFSETPVDGVIAATCSVQVISGQFLSDKKIGTYVEVDMYGLPTDTIRKEFRTRMVMNNGLNPVYNEESFVFRKVILPDLAVLRIAVYDDNNKLIGQRILPLDGLQAGYRHISLRNEGNKPLSLPTIFCNIVLKTYVPDGFGDIVDALSDPKKFLSITEKRADQLRAMGIETSDIADVPSDTSKNDKKGKANPAKANVTPQSSSELRPTTTAALGSGQEAKKGIELIPQVRIEDLKQMKAYLKHLKKQQKELNSLKKKHAKEHSTMQKLHCTQVDKIVAQYDKEKSTHEKILEKAMKKKGGSNCLEIKKETEIKIQTLTSDHKSKVKEIVAQHTKEWSEMINTHSAEEQEIRDLHLSQQCELLRKLLINAHEQQTQQLKLSHDRESKEMRAHQAKISMENSKAISQDKSIKNKAERERRVRELNSSNTKKFLEERKRLAMKQSKEMDQLKKVQLEHLEFLEKQNEQAKEMQQMVKLEAEMDRRPATVV</sequence>
<gene>
    <name evidence="10" type="primary">Plcb4</name>
</gene>
<evidence type="ECO:0000250" key="1">
    <source>
        <dbReference type="UniProtKB" id="Q07722"/>
    </source>
</evidence>
<evidence type="ECO:0000250" key="2">
    <source>
        <dbReference type="UniProtKB" id="Q15147"/>
    </source>
</evidence>
<evidence type="ECO:0000255" key="3">
    <source>
        <dbReference type="PROSITE-ProRule" id="PRU00041"/>
    </source>
</evidence>
<evidence type="ECO:0000255" key="4">
    <source>
        <dbReference type="PROSITE-ProRule" id="PRU00270"/>
    </source>
</evidence>
<evidence type="ECO:0000255" key="5">
    <source>
        <dbReference type="PROSITE-ProRule" id="PRU00271"/>
    </source>
</evidence>
<evidence type="ECO:0000256" key="6">
    <source>
        <dbReference type="SAM" id="MobiDB-lite"/>
    </source>
</evidence>
<evidence type="ECO:0000303" key="7">
    <source>
    </source>
</evidence>
<evidence type="ECO:0000303" key="8">
    <source>
    </source>
</evidence>
<evidence type="ECO:0000305" key="9"/>
<evidence type="ECO:0000312" key="10">
    <source>
        <dbReference type="RGD" id="3345"/>
    </source>
</evidence>
<evidence type="ECO:0007744" key="11">
    <source>
    </source>
</evidence>
<organism>
    <name type="scientific">Rattus norvegicus</name>
    <name type="common">Rat</name>
    <dbReference type="NCBI Taxonomy" id="10116"/>
    <lineage>
        <taxon>Eukaryota</taxon>
        <taxon>Metazoa</taxon>
        <taxon>Chordata</taxon>
        <taxon>Craniata</taxon>
        <taxon>Vertebrata</taxon>
        <taxon>Euteleostomi</taxon>
        <taxon>Mammalia</taxon>
        <taxon>Eutheria</taxon>
        <taxon>Euarchontoglires</taxon>
        <taxon>Glires</taxon>
        <taxon>Rodentia</taxon>
        <taxon>Myomorpha</taxon>
        <taxon>Muroidea</taxon>
        <taxon>Muridae</taxon>
        <taxon>Murinae</taxon>
        <taxon>Rattus</taxon>
    </lineage>
</organism>
<name>PLCB4_RAT</name>
<keyword id="KW-0007">Acetylation</keyword>
<keyword id="KW-0025">Alternative splicing</keyword>
<keyword id="KW-0106">Calcium</keyword>
<keyword id="KW-1003">Cell membrane</keyword>
<keyword id="KW-0378">Hydrolase</keyword>
<keyword id="KW-0442">Lipid degradation</keyword>
<keyword id="KW-0443">Lipid metabolism</keyword>
<keyword id="KW-0472">Membrane</keyword>
<keyword id="KW-0597">Phosphoprotein</keyword>
<keyword id="KW-1185">Reference proteome</keyword>
<keyword id="KW-0807">Transducer</keyword>